<gene>
    <name evidence="1" type="primary">metE</name>
    <name type="ordered locus">SeSA_A4172</name>
</gene>
<evidence type="ECO:0000255" key="1">
    <source>
        <dbReference type="HAMAP-Rule" id="MF_00172"/>
    </source>
</evidence>
<name>METE_SALSV</name>
<keyword id="KW-0028">Amino-acid biosynthesis</keyword>
<keyword id="KW-0479">Metal-binding</keyword>
<keyword id="KW-0486">Methionine biosynthesis</keyword>
<keyword id="KW-0489">Methyltransferase</keyword>
<keyword id="KW-0677">Repeat</keyword>
<keyword id="KW-0808">Transferase</keyword>
<keyword id="KW-0862">Zinc</keyword>
<feature type="chain" id="PRO_1000097844" description="5-methyltetrahydropteroyltriglutamate--homocysteine methyltransferase">
    <location>
        <begin position="1"/>
        <end position="754"/>
    </location>
</feature>
<feature type="active site" description="Proton donor" evidence="1">
    <location>
        <position position="694"/>
    </location>
</feature>
<feature type="binding site" evidence="1">
    <location>
        <begin position="17"/>
        <end position="20"/>
    </location>
    <ligand>
        <name>5-methyltetrahydropteroyltri-L-glutamate</name>
        <dbReference type="ChEBI" id="CHEBI:58207"/>
    </ligand>
</feature>
<feature type="binding site" evidence="1">
    <location>
        <position position="117"/>
    </location>
    <ligand>
        <name>5-methyltetrahydropteroyltri-L-glutamate</name>
        <dbReference type="ChEBI" id="CHEBI:58207"/>
    </ligand>
</feature>
<feature type="binding site" evidence="1">
    <location>
        <begin position="431"/>
        <end position="433"/>
    </location>
    <ligand>
        <name>L-homocysteine</name>
        <dbReference type="ChEBI" id="CHEBI:58199"/>
    </ligand>
</feature>
<feature type="binding site" evidence="1">
    <location>
        <begin position="431"/>
        <end position="433"/>
    </location>
    <ligand>
        <name>L-methionine</name>
        <dbReference type="ChEBI" id="CHEBI:57844"/>
    </ligand>
</feature>
<feature type="binding site" evidence="1">
    <location>
        <position position="484"/>
    </location>
    <ligand>
        <name>L-homocysteine</name>
        <dbReference type="ChEBI" id="CHEBI:58199"/>
    </ligand>
</feature>
<feature type="binding site" evidence="1">
    <location>
        <position position="484"/>
    </location>
    <ligand>
        <name>L-methionine</name>
        <dbReference type="ChEBI" id="CHEBI:57844"/>
    </ligand>
</feature>
<feature type="binding site" evidence="1">
    <location>
        <begin position="515"/>
        <end position="516"/>
    </location>
    <ligand>
        <name>5-methyltetrahydropteroyltri-L-glutamate</name>
        <dbReference type="ChEBI" id="CHEBI:58207"/>
    </ligand>
</feature>
<feature type="binding site" evidence="1">
    <location>
        <position position="561"/>
    </location>
    <ligand>
        <name>5-methyltetrahydropteroyltri-L-glutamate</name>
        <dbReference type="ChEBI" id="CHEBI:58207"/>
    </ligand>
</feature>
<feature type="binding site" evidence="1">
    <location>
        <position position="599"/>
    </location>
    <ligand>
        <name>L-homocysteine</name>
        <dbReference type="ChEBI" id="CHEBI:58199"/>
    </ligand>
</feature>
<feature type="binding site" evidence="1">
    <location>
        <position position="599"/>
    </location>
    <ligand>
        <name>L-methionine</name>
        <dbReference type="ChEBI" id="CHEBI:57844"/>
    </ligand>
</feature>
<feature type="binding site" evidence="1">
    <location>
        <position position="605"/>
    </location>
    <ligand>
        <name>5-methyltetrahydropteroyltri-L-glutamate</name>
        <dbReference type="ChEBI" id="CHEBI:58207"/>
    </ligand>
</feature>
<feature type="binding site" evidence="1">
    <location>
        <position position="641"/>
    </location>
    <ligand>
        <name>Zn(2+)</name>
        <dbReference type="ChEBI" id="CHEBI:29105"/>
        <note>catalytic</note>
    </ligand>
</feature>
<feature type="binding site" evidence="1">
    <location>
        <position position="643"/>
    </location>
    <ligand>
        <name>Zn(2+)</name>
        <dbReference type="ChEBI" id="CHEBI:29105"/>
        <note>catalytic</note>
    </ligand>
</feature>
<feature type="binding site" evidence="1">
    <location>
        <position position="665"/>
    </location>
    <ligand>
        <name>Zn(2+)</name>
        <dbReference type="ChEBI" id="CHEBI:29105"/>
        <note>catalytic</note>
    </ligand>
</feature>
<feature type="binding site" evidence="1">
    <location>
        <position position="726"/>
    </location>
    <ligand>
        <name>Zn(2+)</name>
        <dbReference type="ChEBI" id="CHEBI:29105"/>
        <note>catalytic</note>
    </ligand>
</feature>
<reference key="1">
    <citation type="journal article" date="2011" name="J. Bacteriol.">
        <title>Comparative genomics of 28 Salmonella enterica isolates: evidence for CRISPR-mediated adaptive sublineage evolution.</title>
        <authorList>
            <person name="Fricke W.F."/>
            <person name="Mammel M.K."/>
            <person name="McDermott P.F."/>
            <person name="Tartera C."/>
            <person name="White D.G."/>
            <person name="Leclerc J.E."/>
            <person name="Ravel J."/>
            <person name="Cebula T.A."/>
        </authorList>
    </citation>
    <scope>NUCLEOTIDE SEQUENCE [LARGE SCALE GENOMIC DNA]</scope>
    <source>
        <strain>CVM19633</strain>
    </source>
</reference>
<dbReference type="EC" id="2.1.1.14" evidence="1"/>
<dbReference type="EMBL" id="CP001127">
    <property type="protein sequence ID" value="ACF93012.1"/>
    <property type="molecule type" value="Genomic_DNA"/>
</dbReference>
<dbReference type="RefSeq" id="WP_000154179.1">
    <property type="nucleotide sequence ID" value="NC_011094.1"/>
</dbReference>
<dbReference type="SMR" id="B4TNX3"/>
<dbReference type="KEGG" id="sew:SeSA_A4172"/>
<dbReference type="HOGENOM" id="CLU_013175_0_0_6"/>
<dbReference type="UniPathway" id="UPA00051">
    <property type="reaction ID" value="UER00082"/>
</dbReference>
<dbReference type="Proteomes" id="UP000001865">
    <property type="component" value="Chromosome"/>
</dbReference>
<dbReference type="GO" id="GO:0003871">
    <property type="term" value="F:5-methyltetrahydropteroyltriglutamate-homocysteine S-methyltransferase activity"/>
    <property type="evidence" value="ECO:0007669"/>
    <property type="project" value="UniProtKB-UniRule"/>
</dbReference>
<dbReference type="GO" id="GO:0008270">
    <property type="term" value="F:zinc ion binding"/>
    <property type="evidence" value="ECO:0007669"/>
    <property type="project" value="InterPro"/>
</dbReference>
<dbReference type="GO" id="GO:0009086">
    <property type="term" value="P:methionine biosynthetic process"/>
    <property type="evidence" value="ECO:0007669"/>
    <property type="project" value="UniProtKB-UniRule"/>
</dbReference>
<dbReference type="GO" id="GO:0032259">
    <property type="term" value="P:methylation"/>
    <property type="evidence" value="ECO:0007669"/>
    <property type="project" value="UniProtKB-KW"/>
</dbReference>
<dbReference type="CDD" id="cd03311">
    <property type="entry name" value="CIMS_C_terminal_like"/>
    <property type="match status" value="1"/>
</dbReference>
<dbReference type="CDD" id="cd03312">
    <property type="entry name" value="CIMS_N_terminal_like"/>
    <property type="match status" value="1"/>
</dbReference>
<dbReference type="FunFam" id="3.20.20.210:FF:000002">
    <property type="entry name" value="5-methyltetrahydropteroyltriglutamate--homocysteine methyltransferase"/>
    <property type="match status" value="1"/>
</dbReference>
<dbReference type="FunFam" id="3.20.20.210:FF:000003">
    <property type="entry name" value="5-methyltetrahydropteroyltriglutamate--homocysteine methyltransferase"/>
    <property type="match status" value="1"/>
</dbReference>
<dbReference type="Gene3D" id="3.20.20.210">
    <property type="match status" value="2"/>
</dbReference>
<dbReference type="HAMAP" id="MF_00172">
    <property type="entry name" value="Meth_synth"/>
    <property type="match status" value="1"/>
</dbReference>
<dbReference type="InterPro" id="IPR013215">
    <property type="entry name" value="Cbl-indep_Met_Synth_N"/>
</dbReference>
<dbReference type="InterPro" id="IPR006276">
    <property type="entry name" value="Cobalamin-indep_Met_synthase"/>
</dbReference>
<dbReference type="InterPro" id="IPR002629">
    <property type="entry name" value="Met_Synth_C/arc"/>
</dbReference>
<dbReference type="InterPro" id="IPR038071">
    <property type="entry name" value="UROD/MetE-like_sf"/>
</dbReference>
<dbReference type="NCBIfam" id="TIGR01371">
    <property type="entry name" value="met_syn_B12ind"/>
    <property type="match status" value="1"/>
</dbReference>
<dbReference type="NCBIfam" id="NF003556">
    <property type="entry name" value="PRK05222.1"/>
    <property type="match status" value="1"/>
</dbReference>
<dbReference type="PANTHER" id="PTHR30519">
    <property type="entry name" value="5-METHYLTETRAHYDROPTEROYLTRIGLUTAMATE--HOMOCYSTEINE METHYLTRANSFERASE"/>
    <property type="match status" value="1"/>
</dbReference>
<dbReference type="Pfam" id="PF08267">
    <property type="entry name" value="Meth_synt_1"/>
    <property type="match status" value="1"/>
</dbReference>
<dbReference type="Pfam" id="PF01717">
    <property type="entry name" value="Meth_synt_2"/>
    <property type="match status" value="1"/>
</dbReference>
<dbReference type="PIRSF" id="PIRSF000382">
    <property type="entry name" value="MeTrfase_B12_ind"/>
    <property type="match status" value="1"/>
</dbReference>
<dbReference type="SUPFAM" id="SSF51726">
    <property type="entry name" value="UROD/MetE-like"/>
    <property type="match status" value="2"/>
</dbReference>
<comment type="function">
    <text evidence="1">Catalyzes the transfer of a methyl group from 5-methyltetrahydrofolate to homocysteine resulting in methionine formation.</text>
</comment>
<comment type="catalytic activity">
    <reaction evidence="1">
        <text>5-methyltetrahydropteroyltri-L-glutamate + L-homocysteine = tetrahydropteroyltri-L-glutamate + L-methionine</text>
        <dbReference type="Rhea" id="RHEA:21196"/>
        <dbReference type="ChEBI" id="CHEBI:57844"/>
        <dbReference type="ChEBI" id="CHEBI:58140"/>
        <dbReference type="ChEBI" id="CHEBI:58199"/>
        <dbReference type="ChEBI" id="CHEBI:58207"/>
        <dbReference type="EC" id="2.1.1.14"/>
    </reaction>
</comment>
<comment type="cofactor">
    <cofactor evidence="1">
        <name>Zn(2+)</name>
        <dbReference type="ChEBI" id="CHEBI:29105"/>
    </cofactor>
    <text evidence="1">Binds 1 zinc ion per subunit.</text>
</comment>
<comment type="pathway">
    <text evidence="1">Amino-acid biosynthesis; L-methionine biosynthesis via de novo pathway; L-methionine from L-homocysteine (MetE route): step 1/1.</text>
</comment>
<comment type="similarity">
    <text evidence="1">Belongs to the vitamin-B12 independent methionine synthase family.</text>
</comment>
<proteinExistence type="inferred from homology"/>
<accession>B4TNX3</accession>
<organism>
    <name type="scientific">Salmonella schwarzengrund (strain CVM19633)</name>
    <dbReference type="NCBI Taxonomy" id="439843"/>
    <lineage>
        <taxon>Bacteria</taxon>
        <taxon>Pseudomonadati</taxon>
        <taxon>Pseudomonadota</taxon>
        <taxon>Gammaproteobacteria</taxon>
        <taxon>Enterobacterales</taxon>
        <taxon>Enterobacteriaceae</taxon>
        <taxon>Salmonella</taxon>
    </lineage>
</organism>
<sequence length="754" mass="84631">MTILTHTLGFPRVGLRRELKKAQESYWAGNSTREALLAVGRELRARHWEQQKQAGIDLLPVGDFAWYDHVLTTSLLLGNVPARHQNNDGSVDIDTLFRIGRGRAPTGEPAAAAEMTKWFNTNYHYIVPEFSKGQQFRLTWTQLLEEVDEALALGHKIKPVLLGPVTYLWLGKVKGEPFDRLTLLKDILPVYQHVLAELAKRGIEWVQIDEPALVLELPQAWLDAFKPAYDALAGQVKLLLTTYFEGVTPNLDTIIALPVQGLHVDLIHGKDDVAELHQRLPVDWLLSAGLINGRNVWRADLTEKYAQINAIVGKRALWVASSCSLLHSPIDLSVETRLDTEVKSWFAFALQKCGELALLRDALNSGETAALEEWSAPIQARRHSRRVHNAAVEKRLAAITAQDSQRENPYEVRAEAQRARFKLPAWPTTTIGSFPQTTEIRGLRLDFKKGNLDANNYRTGIAEHIKQAIIEQERLGLDVLVHGEAERNDMVEYFGEHLDGFVFTQNGWVQSYGSRCVKPPVVIGDISRPAPITVEWAKYAQSLTDKPVKGMLTGPVTILCWSFPREDVTRETIAKQIALALRDEVADLEAAGIGIIQIDEPALREGLPLRRSDWDAYLEWGVEAFRINAAVAKDETQIHTHMCYCEFNDIMDSIAALDADVITIETSRSDMELLESFEAFDYPNEIGPGVYDIHSPNVPSVEWIEALLKKAAQRIPAQRLWVNPDCGLKTRGWPETRAALANMVKAAHNLRQAK</sequence>
<protein>
    <recommendedName>
        <fullName evidence="1">5-methyltetrahydropteroyltriglutamate--homocysteine methyltransferase</fullName>
        <ecNumber evidence="1">2.1.1.14</ecNumber>
    </recommendedName>
    <alternativeName>
        <fullName evidence="1">Cobalamin-independent methionine synthase</fullName>
    </alternativeName>
    <alternativeName>
        <fullName evidence="1">Methionine synthase, vitamin-B12 independent isozyme</fullName>
    </alternativeName>
</protein>